<gene>
    <name type="primary">gerPB</name>
    <name type="synonym">yisG</name>
    <name type="ordered locus">BSU10710</name>
</gene>
<dbReference type="EMBL" id="Y09476">
    <property type="protein sequence ID" value="CAA70678.1"/>
    <property type="molecule type" value="Genomic_DNA"/>
</dbReference>
<dbReference type="EMBL" id="AL009126">
    <property type="protein sequence ID" value="CAB12911.2"/>
    <property type="molecule type" value="Genomic_DNA"/>
</dbReference>
<dbReference type="PIR" id="G69836">
    <property type="entry name" value="G69836"/>
</dbReference>
<dbReference type="RefSeq" id="NP_388952.2">
    <property type="nucleotide sequence ID" value="NC_000964.3"/>
</dbReference>
<dbReference type="RefSeq" id="WP_003233090.1">
    <property type="nucleotide sequence ID" value="NZ_OZ025638.1"/>
</dbReference>
<dbReference type="FunCoup" id="O06720">
    <property type="interactions" value="31"/>
</dbReference>
<dbReference type="STRING" id="224308.BSU10710"/>
<dbReference type="PaxDb" id="224308-BSU10710"/>
<dbReference type="EnsemblBacteria" id="CAB12911">
    <property type="protein sequence ID" value="CAB12911"/>
    <property type="gene ID" value="BSU_10710"/>
</dbReference>
<dbReference type="GeneID" id="939781"/>
<dbReference type="KEGG" id="bsu:BSU10710"/>
<dbReference type="PATRIC" id="fig|224308.179.peg.1151"/>
<dbReference type="eggNOG" id="ENOG50335HY">
    <property type="taxonomic scope" value="Bacteria"/>
</dbReference>
<dbReference type="InParanoid" id="O06720"/>
<dbReference type="OrthoDB" id="2971631at2"/>
<dbReference type="BioCyc" id="BSUB:BSU10710-MONOMER"/>
<dbReference type="Proteomes" id="UP000001570">
    <property type="component" value="Chromosome"/>
</dbReference>
<dbReference type="GO" id="GO:0030435">
    <property type="term" value="P:sporulation resulting in formation of a cellular spore"/>
    <property type="evidence" value="ECO:0007669"/>
    <property type="project" value="UniProtKB-KW"/>
</dbReference>
<dbReference type="InterPro" id="IPR024255">
    <property type="entry name" value="GerPB"/>
</dbReference>
<dbReference type="Pfam" id="PF10803">
    <property type="entry name" value="GerPB"/>
    <property type="match status" value="1"/>
</dbReference>
<accession>O06720</accession>
<evidence type="ECO:0000256" key="1">
    <source>
        <dbReference type="SAM" id="MobiDB-lite"/>
    </source>
</evidence>
<sequence>MNFYINQTIQINYLRLESISNSSILQIGSAGSIKSLSNLYNTGSYVEPAPEVSGSGQPLQLQEPDTGSLVPLQPPGR</sequence>
<proteinExistence type="evidence at protein level"/>
<feature type="chain" id="PRO_0000087468" description="Probable spore germination protein GerPB">
    <location>
        <begin position="1"/>
        <end position="77"/>
    </location>
</feature>
<feature type="region of interest" description="Disordered" evidence="1">
    <location>
        <begin position="48"/>
        <end position="77"/>
    </location>
</feature>
<feature type="compositionally biased region" description="Polar residues" evidence="1">
    <location>
        <begin position="54"/>
        <end position="65"/>
    </location>
</feature>
<reference key="1">
    <citation type="journal article" date="1997" name="Microbiology">
        <title>Sequencing of regions downstream of addA (98 degrees) and citG (289 degrees) in Bacillus subtilis.</title>
        <authorList>
            <person name="Medina N."/>
            <person name="Vannier F."/>
            <person name="Roche B."/>
            <person name="Autret S."/>
            <person name="Levine A."/>
            <person name="Seror S.J."/>
        </authorList>
    </citation>
    <scope>NUCLEOTIDE SEQUENCE [GENOMIC DNA]</scope>
    <source>
        <strain>168</strain>
    </source>
</reference>
<reference key="2">
    <citation type="journal article" date="1997" name="Nature">
        <title>The complete genome sequence of the Gram-positive bacterium Bacillus subtilis.</title>
        <authorList>
            <person name="Kunst F."/>
            <person name="Ogasawara N."/>
            <person name="Moszer I."/>
            <person name="Albertini A.M."/>
            <person name="Alloni G."/>
            <person name="Azevedo V."/>
            <person name="Bertero M.G."/>
            <person name="Bessieres P."/>
            <person name="Bolotin A."/>
            <person name="Borchert S."/>
            <person name="Borriss R."/>
            <person name="Boursier L."/>
            <person name="Brans A."/>
            <person name="Braun M."/>
            <person name="Brignell S.C."/>
            <person name="Bron S."/>
            <person name="Brouillet S."/>
            <person name="Bruschi C.V."/>
            <person name="Caldwell B."/>
            <person name="Capuano V."/>
            <person name="Carter N.M."/>
            <person name="Choi S.-K."/>
            <person name="Codani J.-J."/>
            <person name="Connerton I.F."/>
            <person name="Cummings N.J."/>
            <person name="Daniel R.A."/>
            <person name="Denizot F."/>
            <person name="Devine K.M."/>
            <person name="Duesterhoeft A."/>
            <person name="Ehrlich S.D."/>
            <person name="Emmerson P.T."/>
            <person name="Entian K.-D."/>
            <person name="Errington J."/>
            <person name="Fabret C."/>
            <person name="Ferrari E."/>
            <person name="Foulger D."/>
            <person name="Fritz C."/>
            <person name="Fujita M."/>
            <person name="Fujita Y."/>
            <person name="Fuma S."/>
            <person name="Galizzi A."/>
            <person name="Galleron N."/>
            <person name="Ghim S.-Y."/>
            <person name="Glaser P."/>
            <person name="Goffeau A."/>
            <person name="Golightly E.J."/>
            <person name="Grandi G."/>
            <person name="Guiseppi G."/>
            <person name="Guy B.J."/>
            <person name="Haga K."/>
            <person name="Haiech J."/>
            <person name="Harwood C.R."/>
            <person name="Henaut A."/>
            <person name="Hilbert H."/>
            <person name="Holsappel S."/>
            <person name="Hosono S."/>
            <person name="Hullo M.-F."/>
            <person name="Itaya M."/>
            <person name="Jones L.-M."/>
            <person name="Joris B."/>
            <person name="Karamata D."/>
            <person name="Kasahara Y."/>
            <person name="Klaerr-Blanchard M."/>
            <person name="Klein C."/>
            <person name="Kobayashi Y."/>
            <person name="Koetter P."/>
            <person name="Koningstein G."/>
            <person name="Krogh S."/>
            <person name="Kumano M."/>
            <person name="Kurita K."/>
            <person name="Lapidus A."/>
            <person name="Lardinois S."/>
            <person name="Lauber J."/>
            <person name="Lazarevic V."/>
            <person name="Lee S.-M."/>
            <person name="Levine A."/>
            <person name="Liu H."/>
            <person name="Masuda S."/>
            <person name="Mauel C."/>
            <person name="Medigue C."/>
            <person name="Medina N."/>
            <person name="Mellado R.P."/>
            <person name="Mizuno M."/>
            <person name="Moestl D."/>
            <person name="Nakai S."/>
            <person name="Noback M."/>
            <person name="Noone D."/>
            <person name="O'Reilly M."/>
            <person name="Ogawa K."/>
            <person name="Ogiwara A."/>
            <person name="Oudega B."/>
            <person name="Park S.-H."/>
            <person name="Parro V."/>
            <person name="Pohl T.M."/>
            <person name="Portetelle D."/>
            <person name="Porwollik S."/>
            <person name="Prescott A.M."/>
            <person name="Presecan E."/>
            <person name="Pujic P."/>
            <person name="Purnelle B."/>
            <person name="Rapoport G."/>
            <person name="Rey M."/>
            <person name="Reynolds S."/>
            <person name="Rieger M."/>
            <person name="Rivolta C."/>
            <person name="Rocha E."/>
            <person name="Roche B."/>
            <person name="Rose M."/>
            <person name="Sadaie Y."/>
            <person name="Sato T."/>
            <person name="Scanlan E."/>
            <person name="Schleich S."/>
            <person name="Schroeter R."/>
            <person name="Scoffone F."/>
            <person name="Sekiguchi J."/>
            <person name="Sekowska A."/>
            <person name="Seror S.J."/>
            <person name="Serror P."/>
            <person name="Shin B.-S."/>
            <person name="Soldo B."/>
            <person name="Sorokin A."/>
            <person name="Tacconi E."/>
            <person name="Takagi T."/>
            <person name="Takahashi H."/>
            <person name="Takemaru K."/>
            <person name="Takeuchi M."/>
            <person name="Tamakoshi A."/>
            <person name="Tanaka T."/>
            <person name="Terpstra P."/>
            <person name="Tognoni A."/>
            <person name="Tosato V."/>
            <person name="Uchiyama S."/>
            <person name="Vandenbol M."/>
            <person name="Vannier F."/>
            <person name="Vassarotti A."/>
            <person name="Viari A."/>
            <person name="Wambutt R."/>
            <person name="Wedler E."/>
            <person name="Wedler H."/>
            <person name="Weitzenegger T."/>
            <person name="Winters P."/>
            <person name="Wipat A."/>
            <person name="Yamamoto H."/>
            <person name="Yamane K."/>
            <person name="Yasumoto K."/>
            <person name="Yata K."/>
            <person name="Yoshida K."/>
            <person name="Yoshikawa H.-F."/>
            <person name="Zumstein E."/>
            <person name="Yoshikawa H."/>
            <person name="Danchin A."/>
        </authorList>
    </citation>
    <scope>NUCLEOTIDE SEQUENCE [LARGE SCALE GENOMIC DNA]</scope>
    <source>
        <strain>168</strain>
    </source>
</reference>
<reference key="3">
    <citation type="journal article" date="2000" name="J. Bacteriol.">
        <title>Mutations in the gerP locus of Bacillus subtilis and Bacillus cereus affect access of germinants to their targets in spores.</title>
        <authorList>
            <person name="Behravan J."/>
            <person name="Chirakkal H."/>
            <person name="Masson A."/>
            <person name="Moir A."/>
        </authorList>
    </citation>
    <scope>CHARACTERIZATION</scope>
    <source>
        <strain>168 / 1604</strain>
    </source>
</reference>
<organism>
    <name type="scientific">Bacillus subtilis (strain 168)</name>
    <dbReference type="NCBI Taxonomy" id="224308"/>
    <lineage>
        <taxon>Bacteria</taxon>
        <taxon>Bacillati</taxon>
        <taxon>Bacillota</taxon>
        <taxon>Bacilli</taxon>
        <taxon>Bacillales</taxon>
        <taxon>Bacillaceae</taxon>
        <taxon>Bacillus</taxon>
    </lineage>
</organism>
<name>GERPB_BACSU</name>
<keyword id="KW-0309">Germination</keyword>
<keyword id="KW-1185">Reference proteome</keyword>
<keyword id="KW-0749">Sporulation</keyword>
<protein>
    <recommendedName>
        <fullName>Probable spore germination protein GerPB</fullName>
    </recommendedName>
</protein>
<comment type="function">
    <text>Required for the formation of functionally normal spores. Could be involved in the establishment of normal spore coat structure and/or permeability, which allows the access of germinants to their receptor.</text>
</comment>
<comment type="developmental stage">
    <text>Expressed during sporulation, around the time of spore coat synthesis and assembly, in mother cell compartment.</text>
</comment>
<comment type="induction">
    <text>Expression is sigma K-dependent and negatively regulated by GerE.</text>
</comment>